<dbReference type="EC" id="3.4.14.5"/>
<dbReference type="EMBL" id="GG657448">
    <property type="protein sequence ID" value="OAT03364.1"/>
    <property type="molecule type" value="Genomic_DNA"/>
</dbReference>
<dbReference type="RefSeq" id="XP_002628849.1">
    <property type="nucleotide sequence ID" value="XM_002628803.1"/>
</dbReference>
<dbReference type="SMR" id="C5JC30"/>
<dbReference type="STRING" id="559298.C5JC30"/>
<dbReference type="ESTHER" id="ajedr-dapb">
    <property type="family name" value="DPP4N_Peptidase_S9"/>
</dbReference>
<dbReference type="MEROPS" id="S09.006"/>
<dbReference type="GlyCosmos" id="C5JC30">
    <property type="glycosylation" value="6 sites, No reported glycans"/>
</dbReference>
<dbReference type="GeneID" id="8508112"/>
<dbReference type="KEGG" id="bgh:BDBG_00095"/>
<dbReference type="VEuPathDB" id="FungiDB:BDBG_00095"/>
<dbReference type="HOGENOM" id="CLU_006105_0_1_1"/>
<dbReference type="OrthoDB" id="16520at2759"/>
<dbReference type="Proteomes" id="UP000002038">
    <property type="component" value="Unassembled WGS sequence"/>
</dbReference>
<dbReference type="GO" id="GO:0005886">
    <property type="term" value="C:plasma membrane"/>
    <property type="evidence" value="ECO:0007669"/>
    <property type="project" value="TreeGrafter"/>
</dbReference>
<dbReference type="GO" id="GO:0005774">
    <property type="term" value="C:vacuolar membrane"/>
    <property type="evidence" value="ECO:0007669"/>
    <property type="project" value="UniProtKB-SubCell"/>
</dbReference>
<dbReference type="GO" id="GO:0004177">
    <property type="term" value="F:aminopeptidase activity"/>
    <property type="evidence" value="ECO:0007669"/>
    <property type="project" value="UniProtKB-KW"/>
</dbReference>
<dbReference type="GO" id="GO:0008239">
    <property type="term" value="F:dipeptidyl-peptidase activity"/>
    <property type="evidence" value="ECO:0007669"/>
    <property type="project" value="UniProtKB-EC"/>
</dbReference>
<dbReference type="GO" id="GO:0008236">
    <property type="term" value="F:serine-type peptidase activity"/>
    <property type="evidence" value="ECO:0007669"/>
    <property type="project" value="UniProtKB-KW"/>
</dbReference>
<dbReference type="GO" id="GO:0006508">
    <property type="term" value="P:proteolysis"/>
    <property type="evidence" value="ECO:0007669"/>
    <property type="project" value="UniProtKB-KW"/>
</dbReference>
<dbReference type="FunFam" id="3.40.50.1820:FF:000003">
    <property type="entry name" value="Dipeptidyl peptidase 4"/>
    <property type="match status" value="1"/>
</dbReference>
<dbReference type="Gene3D" id="3.40.50.1820">
    <property type="entry name" value="alpha/beta hydrolase"/>
    <property type="match status" value="1"/>
</dbReference>
<dbReference type="Gene3D" id="2.140.10.30">
    <property type="entry name" value="Dipeptidylpeptidase IV, N-terminal domain"/>
    <property type="match status" value="1"/>
</dbReference>
<dbReference type="InterPro" id="IPR029058">
    <property type="entry name" value="AB_hydrolase_fold"/>
</dbReference>
<dbReference type="InterPro" id="IPR001375">
    <property type="entry name" value="Peptidase_S9_cat"/>
</dbReference>
<dbReference type="InterPro" id="IPR002469">
    <property type="entry name" value="Peptidase_S9B_N"/>
</dbReference>
<dbReference type="InterPro" id="IPR050278">
    <property type="entry name" value="Serine_Prot_S9B/DPPIV"/>
</dbReference>
<dbReference type="PANTHER" id="PTHR11731:SF200">
    <property type="entry name" value="DIPEPTIDYL PEPTIDASE 10, ISOFORM B"/>
    <property type="match status" value="1"/>
</dbReference>
<dbReference type="PANTHER" id="PTHR11731">
    <property type="entry name" value="PROTEASE FAMILY S9B,C DIPEPTIDYL-PEPTIDASE IV-RELATED"/>
    <property type="match status" value="1"/>
</dbReference>
<dbReference type="Pfam" id="PF00930">
    <property type="entry name" value="DPPIV_N"/>
    <property type="match status" value="1"/>
</dbReference>
<dbReference type="Pfam" id="PF00326">
    <property type="entry name" value="Peptidase_S9"/>
    <property type="match status" value="1"/>
</dbReference>
<dbReference type="SUPFAM" id="SSF53474">
    <property type="entry name" value="alpha/beta-Hydrolases"/>
    <property type="match status" value="1"/>
</dbReference>
<dbReference type="SUPFAM" id="SSF82171">
    <property type="entry name" value="DPP6 N-terminal domain-like"/>
    <property type="match status" value="1"/>
</dbReference>
<sequence length="915" mass="102912">MAGEKGGSRDEEREPLTRGSIEFRDSINSFDYSSSTASLSLAVIDRINGSTQDSRLGEKDQRDDDHDQYRNEEEYDVEDADYIPSGGKTVQKTTKIVLWALLFLCVGGWSLAFVIFLFRGHDTPQTSIASEENISSGGARGNRITLDEVLGGEWAPRAHSISWFPGPNGEDGLILEKDNLSATAYLRVEDIVGRKDPKASKKSIVLMQKKMFTVGRETVYSAQAWPSPDLKTVLVLSDQQKNWRHSFTGKYWLFDVETQTGQPLDPGAPDRRIQLASWSPQSDAVVFTRDNNMFLRKLTSNEVATITTDGGVDLFYGVPDWVYEEEVFSGNSATWWASDGDYIAFLRTNESSVPDYPIQYFASRPSGENPKPGEENYPEVREVKYPKAGAPNPIVDLQFYDVGKGEVFSVDVTSEFADDDRLIIEVLWASNGKALVRETNRESDILSIAIIDVLSRTGRIVRREDVNALDGGWVEPTQSTRFIPADPDHGRLDDGYIDTVIYEGRDQLAYFTPLDNPKPIMLTKGHSEVVNAPSGVDLKRGLVYFVVAGNEPWERHIYSVNFDGTSLQPLTNVTESSYYDVSFSNGAGYALLNYRGPKVPWQKVINTPANENSFEAIIEQNDHLSRKLRLFSLESKVYQHVTVDGFSLPVMERRPPNFDPAKKYPVLFHLYGGPGSQTVSKKFSVDFQSYVASTLGYIVVTVDGRGTGHIGRKARCIIRGNLGHYEARDQIETAKKWAAKPYVDESRMAIWGWSYGGFMTLKTLEQDGGRTFQYGMAVAPVTDWRYYDSIYTERYMRTPQHNQGGYDTSAISNTTALASNIRFLLMHGTADDNVHIQNSLTLLDKLDLDDVDNYDVHVFPDSDHSIYFHNAHKMVYNRLGDWLINAFNGEWLKVHKPTPNNSLFRRAETWGGLPV</sequence>
<reference key="1">
    <citation type="journal article" date="2015" name="PLoS Genet.">
        <title>The dynamic genome and transcriptome of the human fungal pathogen Blastomyces and close relative Emmonsia.</title>
        <authorList>
            <person name="Munoz J.F."/>
            <person name="Gauthier G.M."/>
            <person name="Desjardins C.A."/>
            <person name="Gallo J.E."/>
            <person name="Holder J."/>
            <person name="Sullivan T.D."/>
            <person name="Marty A.J."/>
            <person name="Carmen J.C."/>
            <person name="Chen Z."/>
            <person name="Ding L."/>
            <person name="Gujja S."/>
            <person name="Magrini V."/>
            <person name="Misas E."/>
            <person name="Mitreva M."/>
            <person name="Priest M."/>
            <person name="Saif S."/>
            <person name="Whiston E.A."/>
            <person name="Young S."/>
            <person name="Zeng Q."/>
            <person name="Goldman W.E."/>
            <person name="Mardis E.R."/>
            <person name="Taylor J.W."/>
            <person name="McEwen J.G."/>
            <person name="Clay O.K."/>
            <person name="Klein B.S."/>
            <person name="Cuomo C.A."/>
        </authorList>
    </citation>
    <scope>NUCLEOTIDE SEQUENCE [LARGE SCALE GENOMIC DNA]</scope>
    <source>
        <strain>SLH14081</strain>
    </source>
</reference>
<protein>
    <recommendedName>
        <fullName>Probable dipeptidyl-aminopeptidase B</fullName>
        <shortName>DPAP B</shortName>
        <ecNumber>3.4.14.5</ecNumber>
    </recommendedName>
</protein>
<organism>
    <name type="scientific">Blastomyces gilchristii (strain SLH14081)</name>
    <name type="common">Blastomyces dermatitidis</name>
    <dbReference type="NCBI Taxonomy" id="559298"/>
    <lineage>
        <taxon>Eukaryota</taxon>
        <taxon>Fungi</taxon>
        <taxon>Dikarya</taxon>
        <taxon>Ascomycota</taxon>
        <taxon>Pezizomycotina</taxon>
        <taxon>Eurotiomycetes</taxon>
        <taxon>Eurotiomycetidae</taxon>
        <taxon>Onygenales</taxon>
        <taxon>Ajellomycetaceae</taxon>
        <taxon>Blastomyces</taxon>
    </lineage>
</organism>
<evidence type="ECO:0000250" key="1"/>
<evidence type="ECO:0000255" key="2"/>
<evidence type="ECO:0000256" key="3">
    <source>
        <dbReference type="SAM" id="MobiDB-lite"/>
    </source>
</evidence>
<evidence type="ECO:0000305" key="4"/>
<comment type="function">
    <text evidence="1">Type IV dipeptidyl-peptidase which removes N-terminal dipeptides sequentially from polypeptides having unsubstituted N-termini provided that the penultimate residue is proline.</text>
</comment>
<comment type="catalytic activity">
    <reaction>
        <text>Release of an N-terminal dipeptide, Xaa-Yaa-|-Zaa-, from a polypeptide, preferentially when Yaa is Pro, provided Zaa is neither Pro nor hydroxyproline.</text>
        <dbReference type="EC" id="3.4.14.5"/>
    </reaction>
</comment>
<comment type="subcellular location">
    <subcellularLocation>
        <location evidence="1">Vacuole membrane</location>
        <topology evidence="1">Single-pass type II membrane protein</topology>
    </subcellularLocation>
    <text evidence="1">Lysosome-like vacuoles.</text>
</comment>
<comment type="similarity">
    <text evidence="4">Belongs to the peptidase S9B family.</text>
</comment>
<feature type="chain" id="PRO_0000412128" description="Probable dipeptidyl-aminopeptidase B">
    <location>
        <begin position="1"/>
        <end position="915"/>
    </location>
</feature>
<feature type="topological domain" description="Cytoplasmic" evidence="2">
    <location>
        <begin position="1"/>
        <end position="95"/>
    </location>
</feature>
<feature type="transmembrane region" description="Helical; Signal-anchor for type II membrane protein" evidence="2">
    <location>
        <begin position="96"/>
        <end position="116"/>
    </location>
</feature>
<feature type="topological domain" description="Vacuolar" evidence="2">
    <location>
        <begin position="117"/>
        <end position="915"/>
    </location>
</feature>
<feature type="region of interest" description="Disordered" evidence="3">
    <location>
        <begin position="1"/>
        <end position="20"/>
    </location>
</feature>
<feature type="region of interest" description="Disordered" evidence="3">
    <location>
        <begin position="52"/>
        <end position="74"/>
    </location>
</feature>
<feature type="compositionally biased region" description="Basic and acidic residues" evidence="3">
    <location>
        <begin position="55"/>
        <end position="72"/>
    </location>
</feature>
<feature type="active site" description="Charge relay system" evidence="1">
    <location>
        <position position="754"/>
    </location>
</feature>
<feature type="active site" description="Charge relay system" evidence="1">
    <location>
        <position position="831"/>
    </location>
</feature>
<feature type="active site" description="Charge relay system" evidence="1">
    <location>
        <position position="864"/>
    </location>
</feature>
<feature type="glycosylation site" description="N-linked (GlcNAc...) asparagine" evidence="2">
    <location>
        <position position="133"/>
    </location>
</feature>
<feature type="glycosylation site" description="N-linked (GlcNAc...) asparagine" evidence="2">
    <location>
        <position position="179"/>
    </location>
</feature>
<feature type="glycosylation site" description="N-linked (GlcNAc...) asparagine" evidence="2">
    <location>
        <position position="349"/>
    </location>
</feature>
<feature type="glycosylation site" description="N-linked (GlcNAc...) asparagine" evidence="2">
    <location>
        <position position="572"/>
    </location>
</feature>
<feature type="glycosylation site" description="N-linked (GlcNAc...) asparagine" evidence="2">
    <location>
        <position position="813"/>
    </location>
</feature>
<feature type="glycosylation site" description="N-linked (GlcNAc...) asparagine" evidence="2">
    <location>
        <position position="900"/>
    </location>
</feature>
<accession>C5JC30</accession>
<accession>A0A179U5S7</accession>
<gene>
    <name type="primary">DAPB</name>
    <name type="ORF">BDBG_00095</name>
</gene>
<name>DAPB_BLAGS</name>
<proteinExistence type="inferred from homology"/>
<keyword id="KW-0031">Aminopeptidase</keyword>
<keyword id="KW-0325">Glycoprotein</keyword>
<keyword id="KW-0378">Hydrolase</keyword>
<keyword id="KW-0472">Membrane</keyword>
<keyword id="KW-0645">Protease</keyword>
<keyword id="KW-1185">Reference proteome</keyword>
<keyword id="KW-0720">Serine protease</keyword>
<keyword id="KW-0735">Signal-anchor</keyword>
<keyword id="KW-0812">Transmembrane</keyword>
<keyword id="KW-1133">Transmembrane helix</keyword>
<keyword id="KW-0926">Vacuole</keyword>